<organism>
    <name type="scientific">Arabidopsis thaliana</name>
    <name type="common">Mouse-ear cress</name>
    <dbReference type="NCBI Taxonomy" id="3702"/>
    <lineage>
        <taxon>Eukaryota</taxon>
        <taxon>Viridiplantae</taxon>
        <taxon>Streptophyta</taxon>
        <taxon>Embryophyta</taxon>
        <taxon>Tracheophyta</taxon>
        <taxon>Spermatophyta</taxon>
        <taxon>Magnoliopsida</taxon>
        <taxon>eudicotyledons</taxon>
        <taxon>Gunneridae</taxon>
        <taxon>Pentapetalae</taxon>
        <taxon>rosids</taxon>
        <taxon>malvids</taxon>
        <taxon>Brassicales</taxon>
        <taxon>Brassicaceae</taxon>
        <taxon>Camelineae</taxon>
        <taxon>Arabidopsis</taxon>
    </lineage>
</organism>
<keyword id="KW-1185">Reference proteome</keyword>
<dbReference type="EMBL" id="AB026647">
    <property type="protein sequence ID" value="BAB02066.1"/>
    <property type="status" value="ALT_SEQ"/>
    <property type="molecule type" value="Genomic_DNA"/>
</dbReference>
<dbReference type="EMBL" id="CP002686">
    <property type="protein sequence ID" value="AEE76975.1"/>
    <property type="molecule type" value="Genomic_DNA"/>
</dbReference>
<dbReference type="EMBL" id="AY600579">
    <property type="protein sequence ID" value="AAT68378.1"/>
    <property type="molecule type" value="mRNA"/>
</dbReference>
<dbReference type="EMBL" id="AY773880">
    <property type="protein sequence ID" value="AAV63909.1"/>
    <property type="molecule type" value="mRNA"/>
</dbReference>
<dbReference type="RefSeq" id="NP_189144.2">
    <property type="nucleotide sequence ID" value="NM_113412.2"/>
</dbReference>
<dbReference type="SMR" id="Q6E244"/>
<dbReference type="PaxDb" id="3702-AT3G25080.1"/>
<dbReference type="EnsemblPlants" id="AT3G25080.1">
    <property type="protein sequence ID" value="AT3G25080.1"/>
    <property type="gene ID" value="AT3G25080"/>
</dbReference>
<dbReference type="GeneID" id="822099"/>
<dbReference type="Gramene" id="AT3G25080.1">
    <property type="protein sequence ID" value="AT3G25080.1"/>
    <property type="gene ID" value="AT3G25080"/>
</dbReference>
<dbReference type="KEGG" id="ath:AT3G25080"/>
<dbReference type="Araport" id="AT3G25080"/>
<dbReference type="TAIR" id="AT3G25080"/>
<dbReference type="HOGENOM" id="CLU_053767_0_2_1"/>
<dbReference type="InParanoid" id="Q6E244"/>
<dbReference type="OMA" id="TCNIARI"/>
<dbReference type="PhylomeDB" id="Q6E244"/>
<dbReference type="PRO" id="PR:Q6E244"/>
<dbReference type="Proteomes" id="UP000006548">
    <property type="component" value="Chromosome 3"/>
</dbReference>
<dbReference type="ExpressionAtlas" id="Q6E244">
    <property type="expression patterns" value="baseline and differential"/>
</dbReference>
<dbReference type="InterPro" id="IPR006462">
    <property type="entry name" value="MS5"/>
</dbReference>
<dbReference type="NCBIfam" id="TIGR01572">
    <property type="entry name" value="A_thl_para_3677"/>
    <property type="match status" value="1"/>
</dbReference>
<dbReference type="PANTHER" id="PTHR31260:SF28">
    <property type="entry name" value="CYSTATIN DOMAIN PROTEIN"/>
    <property type="match status" value="1"/>
</dbReference>
<dbReference type="PANTHER" id="PTHR31260">
    <property type="entry name" value="CYSTATIN/MONELLIN SUPERFAMILY PROTEIN"/>
    <property type="match status" value="1"/>
</dbReference>
<dbReference type="Pfam" id="PF04776">
    <property type="entry name" value="protein_MS5"/>
    <property type="match status" value="1"/>
</dbReference>
<proteinExistence type="evidence at transcript level"/>
<protein>
    <recommendedName>
        <fullName>UPF0725 protein At3g25080</fullName>
    </recommendedName>
</protein>
<accession>Q6E244</accession>
<accession>Q9LSG8</accession>
<reference key="1">
    <citation type="journal article" date="2000" name="DNA Res.">
        <title>Structural analysis of Arabidopsis thaliana chromosome 3. I. Sequence features of the regions of 4,504,864 bp covered by sixty P1 and TAC clones.</title>
        <authorList>
            <person name="Sato S."/>
            <person name="Nakamura Y."/>
            <person name="Kaneko T."/>
            <person name="Katoh T."/>
            <person name="Asamizu E."/>
            <person name="Tabata S."/>
        </authorList>
    </citation>
    <scope>NUCLEOTIDE SEQUENCE [LARGE SCALE GENOMIC DNA]</scope>
    <source>
        <strain>cv. Columbia</strain>
    </source>
</reference>
<reference key="2">
    <citation type="journal article" date="2017" name="Plant J.">
        <title>Araport11: a complete reannotation of the Arabidopsis thaliana reference genome.</title>
        <authorList>
            <person name="Cheng C.Y."/>
            <person name="Krishnakumar V."/>
            <person name="Chan A.P."/>
            <person name="Thibaud-Nissen F."/>
            <person name="Schobel S."/>
            <person name="Town C.D."/>
        </authorList>
    </citation>
    <scope>GENOME REANNOTATION</scope>
    <source>
        <strain>cv. Columbia</strain>
    </source>
</reference>
<reference key="3">
    <citation type="journal article" date="2005" name="Plant Physiol.">
        <title>Analysis of the cDNAs of hypothetical genes on Arabidopsis chromosome 2 reveals numerous transcript variants.</title>
        <authorList>
            <person name="Xiao Y.-L."/>
            <person name="Smith S.R."/>
            <person name="Ishmael N."/>
            <person name="Redman J.C."/>
            <person name="Kumar N."/>
            <person name="Monaghan E.L."/>
            <person name="Ayele M."/>
            <person name="Haas B.J."/>
            <person name="Wu H.C."/>
            <person name="Town C.D."/>
        </authorList>
    </citation>
    <scope>NUCLEOTIDE SEQUENCE [LARGE SCALE MRNA]</scope>
    <source>
        <strain>cv. Columbia</strain>
    </source>
</reference>
<reference key="4">
    <citation type="submission" date="2004-10" db="EMBL/GenBank/DDBJ databases">
        <authorList>
            <person name="Underwood B.A."/>
            <person name="Xiao Y.-L."/>
            <person name="Moskal W.A. Jr."/>
            <person name="Monaghan E.L."/>
            <person name="Wang W."/>
            <person name="Redman J.C."/>
            <person name="Wu H.C."/>
            <person name="Utterback T."/>
            <person name="Town C.D."/>
        </authorList>
    </citation>
    <scope>NUCLEOTIDE SEQUENCE [LARGE SCALE MRNA]</scope>
    <source>
        <strain>cv. Columbia</strain>
    </source>
</reference>
<sequence>MEPAADSSSSLQTFQTEVTEDSFGKFILTCNIARIRGEPSNVYTGLNIGCRLPECPPENPFEIYYLMKDSELQENNDWIRLYLELAVATTDRNREASDFGLSNLEIVNVAVDAEGLLNAKNAIFYIRYKDLYEARLGNAVFDRIAIVRRIFDEDTGRFTLVGQNQSSDIIN</sequence>
<comment type="similarity">
    <text evidence="1">Belongs to the UPF0725 (EMB2204) family.</text>
</comment>
<comment type="sequence caution" evidence="1">
    <conflict type="erroneous gene model prediction">
        <sequence resource="EMBL-CDS" id="BAB02066"/>
    </conflict>
</comment>
<name>Y3258_ARATH</name>
<evidence type="ECO:0000305" key="1"/>
<gene>
    <name type="ordered locus">At3g25080</name>
    <name type="ORF">MJL12.2</name>
</gene>
<feature type="chain" id="PRO_0000363117" description="UPF0725 protein At3g25080">
    <location>
        <begin position="1"/>
        <end position="171"/>
    </location>
</feature>